<accession>Q59YF4</accession>
<accession>A0A1D8PIH7</accession>
<accession>Q59YQ3</accession>
<gene>
    <name type="primary">IRC22-1</name>
    <name type="ordered locus">CAALFM_C209780CA</name>
    <name type="ORF">CaO19.1372</name>
    <name type="ORF">CaO19.8952</name>
</gene>
<organism>
    <name type="scientific">Candida albicans (strain SC5314 / ATCC MYA-2876)</name>
    <name type="common">Yeast</name>
    <dbReference type="NCBI Taxonomy" id="237561"/>
    <lineage>
        <taxon>Eukaryota</taxon>
        <taxon>Fungi</taxon>
        <taxon>Dikarya</taxon>
        <taxon>Ascomycota</taxon>
        <taxon>Saccharomycotina</taxon>
        <taxon>Pichiomycetes</taxon>
        <taxon>Debaryomycetaceae</taxon>
        <taxon>Candida/Lodderomyces clade</taxon>
        <taxon>Candida</taxon>
    </lineage>
</organism>
<feature type="signal peptide" evidence="2">
    <location>
        <begin position="1"/>
        <end position="19"/>
    </location>
</feature>
<feature type="chain" id="PRO_0000399070" description="Increased recombination centers protein 22-1">
    <location>
        <begin position="20"/>
        <end position="239"/>
    </location>
</feature>
<feature type="topological domain" description="Lumenal" evidence="2">
    <location>
        <begin position="20"/>
        <end position="161"/>
    </location>
</feature>
<feature type="transmembrane region" description="Helical" evidence="2">
    <location>
        <begin position="162"/>
        <end position="182"/>
    </location>
</feature>
<feature type="topological domain" description="Cytoplasmic" evidence="2">
    <location>
        <begin position="183"/>
        <end position="239"/>
    </location>
</feature>
<feature type="region of interest" description="Disordered" evidence="3">
    <location>
        <begin position="201"/>
        <end position="222"/>
    </location>
</feature>
<feature type="compositionally biased region" description="Low complexity" evidence="3">
    <location>
        <begin position="201"/>
        <end position="213"/>
    </location>
</feature>
<comment type="function">
    <text>Is probably involved in a pathway contributing to genomic integrity.</text>
</comment>
<comment type="subcellular location">
    <subcellularLocation>
        <location evidence="1">Endoplasmic reticulum membrane</location>
        <topology evidence="1">Single-pass type I membrane protein</topology>
    </subcellularLocation>
</comment>
<comment type="similarity">
    <text evidence="4">Belongs to the IRC22 family.</text>
</comment>
<evidence type="ECO:0000250" key="1"/>
<evidence type="ECO:0000255" key="2"/>
<evidence type="ECO:0000256" key="3">
    <source>
        <dbReference type="SAM" id="MobiDB-lite"/>
    </source>
</evidence>
<evidence type="ECO:0000305" key="4"/>
<proteinExistence type="inferred from homology"/>
<sequence>MKLSTIFTAFAATIATVAGYETTGSKQTVDILIDYIIKETPELSQNDVANWENGDTVTLQYVVNNNEESEITVVGVTGQFKNPVNNEIVTNLTTGKVGPIAVPPGEAIKFDQKINVDLIPANYELIPYVFIAQDSLIKVIPCRGQLATIVDAAVSFFDPRLIFLELVLLITFAGLIYVGYEIWGKQYFKGVAPVKAKKVSAAKASSPVASGPSTTSATGYDTNWIPESHLKQKKTKKVN</sequence>
<keyword id="KW-0256">Endoplasmic reticulum</keyword>
<keyword id="KW-0472">Membrane</keyword>
<keyword id="KW-1185">Reference proteome</keyword>
<keyword id="KW-0732">Signal</keyword>
<keyword id="KW-0812">Transmembrane</keyword>
<keyword id="KW-1133">Transmembrane helix</keyword>
<reference key="1">
    <citation type="journal article" date="2004" name="Proc. Natl. Acad. Sci. U.S.A.">
        <title>The diploid genome sequence of Candida albicans.</title>
        <authorList>
            <person name="Jones T."/>
            <person name="Federspiel N.A."/>
            <person name="Chibana H."/>
            <person name="Dungan J."/>
            <person name="Kalman S."/>
            <person name="Magee B.B."/>
            <person name="Newport G."/>
            <person name="Thorstenson Y.R."/>
            <person name="Agabian N."/>
            <person name="Magee P.T."/>
            <person name="Davis R.W."/>
            <person name="Scherer S."/>
        </authorList>
    </citation>
    <scope>NUCLEOTIDE SEQUENCE [LARGE SCALE GENOMIC DNA]</scope>
    <source>
        <strain>SC5314 / ATCC MYA-2876</strain>
    </source>
</reference>
<reference key="2">
    <citation type="journal article" date="2007" name="Genome Biol.">
        <title>Assembly of the Candida albicans genome into sixteen supercontigs aligned on the eight chromosomes.</title>
        <authorList>
            <person name="van het Hoog M."/>
            <person name="Rast T.J."/>
            <person name="Martchenko M."/>
            <person name="Grindle S."/>
            <person name="Dignard D."/>
            <person name="Hogues H."/>
            <person name="Cuomo C."/>
            <person name="Berriman M."/>
            <person name="Scherer S."/>
            <person name="Magee B.B."/>
            <person name="Whiteway M."/>
            <person name="Chibana H."/>
            <person name="Nantel A."/>
            <person name="Magee P.T."/>
        </authorList>
    </citation>
    <scope>GENOME REANNOTATION</scope>
    <source>
        <strain>SC5314 / ATCC MYA-2876</strain>
    </source>
</reference>
<reference key="3">
    <citation type="journal article" date="2013" name="Genome Biol.">
        <title>Assembly of a phased diploid Candida albicans genome facilitates allele-specific measurements and provides a simple model for repeat and indel structure.</title>
        <authorList>
            <person name="Muzzey D."/>
            <person name="Schwartz K."/>
            <person name="Weissman J.S."/>
            <person name="Sherlock G."/>
        </authorList>
    </citation>
    <scope>NUCLEOTIDE SEQUENCE [LARGE SCALE GENOMIC DNA]</scope>
    <scope>GENOME REANNOTATION</scope>
    <source>
        <strain>SC5314 / ATCC MYA-2876</strain>
    </source>
</reference>
<name>IR221_CANAL</name>
<protein>
    <recommendedName>
        <fullName>Increased recombination centers protein 22-1</fullName>
    </recommendedName>
</protein>
<dbReference type="EMBL" id="CP017624">
    <property type="protein sequence ID" value="AOW27956.1"/>
    <property type="molecule type" value="Genomic_DNA"/>
</dbReference>
<dbReference type="RefSeq" id="XP_714546.1">
    <property type="nucleotide sequence ID" value="XM_709453.2"/>
</dbReference>
<dbReference type="FunCoup" id="Q59YF4">
    <property type="interactions" value="32"/>
</dbReference>
<dbReference type="STRING" id="237561.Q59YF4"/>
<dbReference type="EnsemblFungi" id="C2_09780C_A-T">
    <property type="protein sequence ID" value="C2_09780C_A-T-p1"/>
    <property type="gene ID" value="C2_09780C_A"/>
</dbReference>
<dbReference type="GeneID" id="3643805"/>
<dbReference type="KEGG" id="cal:CAALFM_C209780CA"/>
<dbReference type="CGD" id="CAL0000174666">
    <property type="gene designation" value="orf19.8952"/>
</dbReference>
<dbReference type="VEuPathDB" id="FungiDB:C2_09780C_A"/>
<dbReference type="HOGENOM" id="CLU_078554_0_0_1"/>
<dbReference type="InParanoid" id="Q59YF4"/>
<dbReference type="OMA" id="WLPETYK"/>
<dbReference type="OrthoDB" id="1926781at2759"/>
<dbReference type="PRO" id="PR:Q59YF4"/>
<dbReference type="Proteomes" id="UP000000559">
    <property type="component" value="Chromosome 2"/>
</dbReference>
<dbReference type="GO" id="GO:0005783">
    <property type="term" value="C:endoplasmic reticulum"/>
    <property type="evidence" value="ECO:0000318"/>
    <property type="project" value="GO_Central"/>
</dbReference>
<dbReference type="GO" id="GO:0005789">
    <property type="term" value="C:endoplasmic reticulum membrane"/>
    <property type="evidence" value="ECO:0007669"/>
    <property type="project" value="UniProtKB-SubCell"/>
</dbReference>
<dbReference type="InterPro" id="IPR005595">
    <property type="entry name" value="TRAP_alpha"/>
</dbReference>
<dbReference type="PANTHER" id="PTHR12924:SF0">
    <property type="entry name" value="TRANSLOCON-ASSOCIATED PROTEIN SUBUNIT ALPHA"/>
    <property type="match status" value="1"/>
</dbReference>
<dbReference type="PANTHER" id="PTHR12924">
    <property type="entry name" value="TRANSLOCON-ASSOCIATED PROTEIN, ALPHA SUBUNIT"/>
    <property type="match status" value="1"/>
</dbReference>
<dbReference type="Pfam" id="PF03896">
    <property type="entry name" value="TRAP_alpha"/>
    <property type="match status" value="1"/>
</dbReference>